<protein>
    <recommendedName>
        <fullName evidence="2">Envelope glycoprotein L</fullName>
        <shortName evidence="2">gL</shortName>
    </recommendedName>
</protein>
<organism>
    <name type="scientific">Human cytomegalovirus (strain 5160)</name>
    <name type="common">HHV-5</name>
    <name type="synonym">Human herpesvirus 5</name>
    <dbReference type="NCBI Taxonomy" id="69167"/>
    <lineage>
        <taxon>Viruses</taxon>
        <taxon>Duplodnaviria</taxon>
        <taxon>Heunggongvirae</taxon>
        <taxon>Peploviricota</taxon>
        <taxon>Herviviricetes</taxon>
        <taxon>Herpesvirales</taxon>
        <taxon>Orthoherpesviridae</taxon>
        <taxon>Betaherpesvirinae</taxon>
        <taxon>Cytomegalovirus</taxon>
        <taxon>Cytomegalovirus humanbeta5</taxon>
        <taxon>Human cytomegalovirus</taxon>
    </lineage>
</organism>
<evidence type="ECO:0000250" key="1">
    <source>
        <dbReference type="UniProtKB" id="F5HCH8"/>
    </source>
</evidence>
<evidence type="ECO:0000255" key="2">
    <source>
        <dbReference type="HAMAP-Rule" id="MF_04036"/>
    </source>
</evidence>
<evidence type="ECO:0000255" key="3">
    <source>
        <dbReference type="PROSITE-ProRule" id="PRU01369"/>
    </source>
</evidence>
<sequence length="278" mass="30830">MCRRPDCGFSFSPGPVILLWCCLLLPIVSSAAVSVAPTAAEKVPAECPELTRRCLLGEVFQGDKYESWLRPLVNVTGRDGPLSQLIRYRPVTPEAANSVLLDEAFLDTLALLYNNPDQLRALLTLLSSDTAPRWMTVMRGYSECGDGSPAVYTCVDDLCRGYDLTRLSYGRSIFTEHVLGFELVLPSLFNVVVAIRNEATRTNRAVRLPVSTAAAPEGITLFYGLYNAVKEFCLRHQLDPPLLRHLDKYYAGLPPELKQTRVNLPAHSRYGPQAVDAR</sequence>
<proteinExistence type="inferred from homology"/>
<comment type="function">
    <text evidence="1 2">The heterodimer glycoprotein H-glycoprotein L is required for the fusion of viral and plasma membranes leading to virus entry into the host cell. Acts as a functional inhibitor of gH and maintains gH in an inhibited form. Upon binding to host integrins, gL dissociates from gH leading to activation of the viral fusion glycoproteins gB and gH (By similarity). In human cytomegalovirus, forms two distincts complexes to mediate viral entry, a trimer and a pentamer at the surface of the virion envelope. The gH-gL-gO trimer is required for infection in fibroblasts by interacting with host PDGFRA, and in glioblastoma cells by interacting with host EPHA2. The gH-gL-UL128-UL130-UL131A pentamer is essential for viral entry in epithelial, endothelial and myeloid cells via interaction with host NRP2 (By similarity).</text>
</comment>
<comment type="subunit">
    <text evidence="1 2">Interacts with glycoprotein H (gH); this interaction is necessary for the correct processing and cell surface expression of gH (By similarity). Forms the envelope pentamer complex (PC) composed of gH, gL, UL128, UL130, and UL131A. The pentamer interacts with host NRP2. Forms the envelope trimer complex composed of gH, gL, and gO. The trimer interacts with host PDGFRA (By similarity). The trimer also interacts with host EPHA2 (By similarity).</text>
</comment>
<comment type="subcellular location">
    <subcellularLocation>
        <location evidence="2">Virion membrane</location>
        <topology evidence="2">Peripheral membrane protein</topology>
        <orientation evidence="2">Extracellular side</orientation>
    </subcellularLocation>
    <subcellularLocation>
        <location evidence="2">Host cell membrane</location>
        <topology evidence="2">Peripheral membrane protein</topology>
        <orientation evidence="2">Extracellular side</orientation>
    </subcellularLocation>
    <subcellularLocation>
        <location evidence="2">Host Golgi apparatus</location>
        <location evidence="2">Host trans-Golgi network</location>
    </subcellularLocation>
    <text evidence="2">gL associates with the extravirion surface through its binding to gH. During virion morphogenesis, this protein probably accumulates in the host trans-Golgi where secondary envelopment occurs.</text>
</comment>
<comment type="similarity">
    <text evidence="3">Belongs to the herpesviridae glycoprotein L (gL) family. Betaherpesvirinae gL subfamily.</text>
</comment>
<reference key="1">
    <citation type="submission" date="1996-04" db="EMBL/GenBank/DDBJ databases">
        <authorList>
            <person name="Milne R.S.B."/>
            <person name="Mathers K.E."/>
            <person name="Booth J.C."/>
        </authorList>
    </citation>
    <scope>NUCLEOTIDE SEQUENCE [GENOMIC DNA]</scope>
</reference>
<name>GL_HCMV7</name>
<feature type="signal peptide" evidence="2">
    <location>
        <begin position="1"/>
        <end position="30"/>
    </location>
</feature>
<feature type="chain" id="PRO_0000038286" description="Envelope glycoprotein L" evidence="2">
    <location>
        <begin position="31"/>
        <end position="278"/>
    </location>
</feature>
<feature type="domain" description="gL betaherpesvirus-type" evidence="3">
    <location>
        <begin position="43"/>
        <end position="256"/>
    </location>
</feature>
<feature type="disulfide bond" description="Interchain" evidence="3">
    <location>
        <position position="47"/>
    </location>
</feature>
<feature type="disulfide bond" description="Interchain" evidence="3">
    <location>
        <position position="54"/>
    </location>
</feature>
<feature type="disulfide bond" description="Interchain" evidence="3">
    <location>
        <position position="144"/>
    </location>
</feature>
<feature type="disulfide bond" evidence="3">
    <location>
        <begin position="154"/>
        <end position="159"/>
    </location>
</feature>
<dbReference type="EMBL" id="U56918">
    <property type="protein sequence ID" value="AAA99169.1"/>
    <property type="molecule type" value="Genomic_DNA"/>
</dbReference>
<dbReference type="SMR" id="Q68673"/>
<dbReference type="GO" id="GO:0044177">
    <property type="term" value="C:host cell Golgi apparatus"/>
    <property type="evidence" value="ECO:0007669"/>
    <property type="project" value="UniProtKB-SubCell"/>
</dbReference>
<dbReference type="GO" id="GO:0020002">
    <property type="term" value="C:host cell plasma membrane"/>
    <property type="evidence" value="ECO:0007669"/>
    <property type="project" value="UniProtKB-SubCell"/>
</dbReference>
<dbReference type="GO" id="GO:0016020">
    <property type="term" value="C:membrane"/>
    <property type="evidence" value="ECO:0007669"/>
    <property type="project" value="UniProtKB-KW"/>
</dbReference>
<dbReference type="GO" id="GO:0019031">
    <property type="term" value="C:viral envelope"/>
    <property type="evidence" value="ECO:0007669"/>
    <property type="project" value="UniProtKB-UniRule"/>
</dbReference>
<dbReference type="GO" id="GO:0055036">
    <property type="term" value="C:virion membrane"/>
    <property type="evidence" value="ECO:0007669"/>
    <property type="project" value="UniProtKB-SubCell"/>
</dbReference>
<dbReference type="GO" id="GO:0098670">
    <property type="term" value="P:entry receptor-mediated virion attachment to host cell"/>
    <property type="evidence" value="ECO:0007669"/>
    <property type="project" value="UniProtKB-KW"/>
</dbReference>
<dbReference type="GO" id="GO:0019064">
    <property type="term" value="P:fusion of virus membrane with host plasma membrane"/>
    <property type="evidence" value="ECO:0007669"/>
    <property type="project" value="UniProtKB-UniRule"/>
</dbReference>
<dbReference type="GO" id="GO:0046718">
    <property type="term" value="P:symbiont entry into host cell"/>
    <property type="evidence" value="ECO:0007669"/>
    <property type="project" value="UniProtKB-KW"/>
</dbReference>
<dbReference type="HAMAP" id="MF_04036">
    <property type="entry name" value="HSV_GL_betahv"/>
    <property type="match status" value="1"/>
</dbReference>
<dbReference type="InterPro" id="IPR002689">
    <property type="entry name" value="Cytomegalo_gL"/>
</dbReference>
<dbReference type="Pfam" id="PF01801">
    <property type="entry name" value="Cytomega_gL"/>
    <property type="match status" value="1"/>
</dbReference>
<dbReference type="PROSITE" id="PS52025">
    <property type="entry name" value="GL_BHV"/>
    <property type="match status" value="1"/>
</dbReference>
<organismHost>
    <name type="scientific">Homo sapiens</name>
    <name type="common">Human</name>
    <dbReference type="NCBI Taxonomy" id="9606"/>
</organismHost>
<gene>
    <name evidence="2" type="primary">gL</name>
    <name type="synonym">UL115</name>
</gene>
<accession>Q68673</accession>
<keyword id="KW-1015">Disulfide bond</keyword>
<keyword id="KW-1169">Fusion of virus membrane with host cell membrane</keyword>
<keyword id="KW-1168">Fusion of virus membrane with host membrane</keyword>
<keyword id="KW-0325">Glycoprotein</keyword>
<keyword id="KW-1032">Host cell membrane</keyword>
<keyword id="KW-1040">Host Golgi apparatus</keyword>
<keyword id="KW-1043">Host membrane</keyword>
<keyword id="KW-0945">Host-virus interaction</keyword>
<keyword id="KW-0472">Membrane</keyword>
<keyword id="KW-0732">Signal</keyword>
<keyword id="KW-1161">Viral attachment to host cell</keyword>
<keyword id="KW-1234">Viral attachment to host entry receptor</keyword>
<keyword id="KW-0261">Viral envelope protein</keyword>
<keyword id="KW-1162">Viral penetration into host cytoplasm</keyword>
<keyword id="KW-0946">Virion</keyword>
<keyword id="KW-1160">Virus entry into host cell</keyword>